<dbReference type="EMBL" id="AY727926">
    <property type="protein sequence ID" value="AAW28137.1"/>
    <property type="molecule type" value="mRNA"/>
</dbReference>
<dbReference type="RefSeq" id="NP_001075647.1">
    <property type="nucleotide sequence ID" value="NM_001082178.1"/>
</dbReference>
<dbReference type="PDB" id="5K0Y">
    <property type="method" value="EM"/>
    <property type="resolution" value="5.80 A"/>
    <property type="chains" value="T=1-329"/>
</dbReference>
<dbReference type="PDBsum" id="5K0Y"/>
<dbReference type="EMDB" id="EMD-8190"/>
<dbReference type="SMR" id="Q5IH81"/>
<dbReference type="DIP" id="DIP-61828N"/>
<dbReference type="IntAct" id="Q5IH81">
    <property type="interactions" value="9"/>
</dbReference>
<dbReference type="STRING" id="9986.ENSOCUP00000006589"/>
<dbReference type="PaxDb" id="9986-ENSOCUP00000006589"/>
<dbReference type="GeneID" id="100008959"/>
<dbReference type="KEGG" id="ocu:100008959"/>
<dbReference type="CTD" id="8668"/>
<dbReference type="eggNOG" id="KOG0643">
    <property type="taxonomic scope" value="Eukaryota"/>
</dbReference>
<dbReference type="InParanoid" id="Q5IH81"/>
<dbReference type="OrthoDB" id="24966at2759"/>
<dbReference type="Proteomes" id="UP000001811">
    <property type="component" value="Unplaced"/>
</dbReference>
<dbReference type="GO" id="GO:0016282">
    <property type="term" value="C:eukaryotic 43S preinitiation complex"/>
    <property type="evidence" value="ECO:0007669"/>
    <property type="project" value="UniProtKB-UniRule"/>
</dbReference>
<dbReference type="GO" id="GO:0033290">
    <property type="term" value="C:eukaryotic 48S preinitiation complex"/>
    <property type="evidence" value="ECO:0007669"/>
    <property type="project" value="UniProtKB-UniRule"/>
</dbReference>
<dbReference type="GO" id="GO:0005852">
    <property type="term" value="C:eukaryotic translation initiation factor 3 complex"/>
    <property type="evidence" value="ECO:0000250"/>
    <property type="project" value="UniProtKB"/>
</dbReference>
<dbReference type="GO" id="GO:0071541">
    <property type="term" value="C:eukaryotic translation initiation factor 3 complex, eIF3m"/>
    <property type="evidence" value="ECO:0007669"/>
    <property type="project" value="TreeGrafter"/>
</dbReference>
<dbReference type="GO" id="GO:0003723">
    <property type="term" value="F:RNA binding"/>
    <property type="evidence" value="ECO:0007669"/>
    <property type="project" value="TreeGrafter"/>
</dbReference>
<dbReference type="GO" id="GO:0003743">
    <property type="term" value="F:translation initiation factor activity"/>
    <property type="evidence" value="ECO:0000250"/>
    <property type="project" value="UniProtKB"/>
</dbReference>
<dbReference type="GO" id="GO:0001732">
    <property type="term" value="P:formation of cytoplasmic translation initiation complex"/>
    <property type="evidence" value="ECO:0007669"/>
    <property type="project" value="UniProtKB-UniRule"/>
</dbReference>
<dbReference type="GO" id="GO:0006413">
    <property type="term" value="P:translational initiation"/>
    <property type="evidence" value="ECO:0000250"/>
    <property type="project" value="UniProtKB"/>
</dbReference>
<dbReference type="FunFam" id="2.130.10.10:FF:000127">
    <property type="entry name" value="Eukaryotic translation initiation factor 3 subunit I"/>
    <property type="match status" value="1"/>
</dbReference>
<dbReference type="Gene3D" id="2.130.10.10">
    <property type="entry name" value="YVTN repeat-like/Quinoprotein amine dehydrogenase"/>
    <property type="match status" value="1"/>
</dbReference>
<dbReference type="HAMAP" id="MF_03008">
    <property type="entry name" value="eIF3i"/>
    <property type="match status" value="1"/>
</dbReference>
<dbReference type="InterPro" id="IPR027525">
    <property type="entry name" value="eIF3i"/>
</dbReference>
<dbReference type="InterPro" id="IPR015943">
    <property type="entry name" value="WD40/YVTN_repeat-like_dom_sf"/>
</dbReference>
<dbReference type="InterPro" id="IPR019775">
    <property type="entry name" value="WD40_repeat_CS"/>
</dbReference>
<dbReference type="InterPro" id="IPR036322">
    <property type="entry name" value="WD40_repeat_dom_sf"/>
</dbReference>
<dbReference type="InterPro" id="IPR001680">
    <property type="entry name" value="WD40_rpt"/>
</dbReference>
<dbReference type="PANTHER" id="PTHR19877">
    <property type="entry name" value="EUKARYOTIC TRANSLATION INITIATION FACTOR 3 SUBUNIT I"/>
    <property type="match status" value="1"/>
</dbReference>
<dbReference type="PANTHER" id="PTHR19877:SF1">
    <property type="entry name" value="EUKARYOTIC TRANSLATION INITIATION FACTOR 3 SUBUNIT I"/>
    <property type="match status" value="1"/>
</dbReference>
<dbReference type="Pfam" id="PF24805">
    <property type="entry name" value="EIF3I"/>
    <property type="match status" value="1"/>
</dbReference>
<dbReference type="SMART" id="SM00320">
    <property type="entry name" value="WD40"/>
    <property type="match status" value="5"/>
</dbReference>
<dbReference type="SUPFAM" id="SSF50978">
    <property type="entry name" value="WD40 repeat-like"/>
    <property type="match status" value="1"/>
</dbReference>
<dbReference type="PROSITE" id="PS00678">
    <property type="entry name" value="WD_REPEATS_1"/>
    <property type="match status" value="1"/>
</dbReference>
<dbReference type="PROSITE" id="PS50082">
    <property type="entry name" value="WD_REPEATS_2"/>
    <property type="match status" value="4"/>
</dbReference>
<dbReference type="PROSITE" id="PS50294">
    <property type="entry name" value="WD_REPEATS_REGION"/>
    <property type="match status" value="2"/>
</dbReference>
<comment type="function">
    <text evidence="2">Component of the eukaryotic translation initiation factor 3 (eIF-3) complex, which is required for several steps in the initiation of protein synthesis. The eIF-3 complex associates with the 40S ribosome and facilitates the recruitment of eIF-1, eIF-1A, eIF-2:GTP:methionyl-tRNAi and eIF-5 to form the 43S pre-initiation complex (43S PIC). The eIF-3 complex stimulates mRNA recruitment to the 43S PIC and scanning of the mRNA for AUG recognition. The eIF-3 complex is also required for disassembly and recycling of post-termination ribosomal complexes and subsequently prevents premature joining of the 40S and 60S ribosomal subunits prior to initiation. The eIF-3 complex specifically targets and initiates translation of a subset of mRNAs involved in cell proliferation, including cell cycling, differentiation and apoptosis, and uses different modes of RNA stem-loop binding to exert either translational activation or repression.</text>
</comment>
<comment type="subunit">
    <text evidence="2">Component of the eukaryotic translation initiation factor 3 (eIF-3) complex, which is composed of 13 subunits: EIF3A, EIF3B, EIF3C, EIF3D, EIF3E, EIF3F, EIF3G, EIF3H, EIF3I, EIF3J, EIF3K, EIF3L and EIF3M. The eIF-3 complex appears to include 3 stable modules: module A is composed of EIF3A, EIF3B, EIF3G and EIF3I; module B is composed of EIF3F, EIF3H, and EIF3M; and module C is composed of EIF3C, EIF3D, EIF3E, EIF3K and EIF3L. EIF3C of module C binds EIF3B of module A and EIF3H of module B, thereby linking the three modules. EIF3J is a labile subunit that binds to the eIF-3 complex via EIF3B. The eIF-3 complex interacts with RPS6KB1 under conditions of nutrient depletion. Mitogenic stimulation leads to binding and activation of a complex composed of MTOR and RPTOR, leading to phosphorylation and release of RPS6KB1 and binding of EIF4B to eIF-3.</text>
</comment>
<comment type="subcellular location">
    <subcellularLocation>
        <location evidence="2">Cytoplasm</location>
    </subcellularLocation>
</comment>
<comment type="PTM">
    <text evidence="2">Phosphorylated by TGF-beta type II receptor.</text>
</comment>
<comment type="similarity">
    <text evidence="2">Belongs to the eIF-3 subunit I family.</text>
</comment>
<organism>
    <name type="scientific">Oryctolagus cuniculus</name>
    <name type="common">Rabbit</name>
    <dbReference type="NCBI Taxonomy" id="9986"/>
    <lineage>
        <taxon>Eukaryota</taxon>
        <taxon>Metazoa</taxon>
        <taxon>Chordata</taxon>
        <taxon>Craniata</taxon>
        <taxon>Vertebrata</taxon>
        <taxon>Euteleostomi</taxon>
        <taxon>Mammalia</taxon>
        <taxon>Eutheria</taxon>
        <taxon>Euarchontoglires</taxon>
        <taxon>Glires</taxon>
        <taxon>Lagomorpha</taxon>
        <taxon>Leporidae</taxon>
        <taxon>Oryctolagus</taxon>
    </lineage>
</organism>
<gene>
    <name evidence="2" type="primary">EIF3I</name>
    <name evidence="2" type="synonym">EIF3S2</name>
</gene>
<name>EIF3I_RABIT</name>
<keyword id="KW-0002">3D-structure</keyword>
<keyword id="KW-0007">Acetylation</keyword>
<keyword id="KW-0963">Cytoplasm</keyword>
<keyword id="KW-0396">Initiation factor</keyword>
<keyword id="KW-1017">Isopeptide bond</keyword>
<keyword id="KW-0597">Phosphoprotein</keyword>
<keyword id="KW-0648">Protein biosynthesis</keyword>
<keyword id="KW-1185">Reference proteome</keyword>
<keyword id="KW-0677">Repeat</keyword>
<keyword id="KW-0832">Ubl conjugation</keyword>
<keyword id="KW-0853">WD repeat</keyword>
<protein>
    <recommendedName>
        <fullName evidence="2">Eukaryotic translation initiation factor 3 subunit I</fullName>
        <shortName evidence="2">eIF3i</shortName>
    </recommendedName>
    <alternativeName>
        <fullName evidence="2">Eukaryotic translation initiation factor 3 subunit 2</fullName>
    </alternativeName>
    <alternativeName>
        <fullName evidence="2">eIF-3-beta</fullName>
    </alternativeName>
    <alternativeName>
        <fullName evidence="2">eIF3 p36</fullName>
    </alternativeName>
</protein>
<proteinExistence type="evidence at protein level"/>
<evidence type="ECO:0000250" key="1">
    <source>
        <dbReference type="UniProtKB" id="Q13347"/>
    </source>
</evidence>
<evidence type="ECO:0000255" key="2">
    <source>
        <dbReference type="HAMAP-Rule" id="MF_03008"/>
    </source>
</evidence>
<accession>Q5IH81</accession>
<reference key="1">
    <citation type="journal article" date="2005" name="Exp. Mol. Med.">
        <title>Representational difference analysis of cDNA identifies novel genes expressed following preconditioning of the heart.</title>
        <authorList>
            <person name="Fauchon M.A."/>
            <person name="Pell T.J."/>
            <person name="Baxter G.F."/>
            <person name="Yellon D.M."/>
            <person name="Latchman D.S."/>
            <person name="Hubank M.F."/>
            <person name="Mayne L.V."/>
        </authorList>
    </citation>
    <scope>NUCLEOTIDE SEQUENCE [MRNA]</scope>
    <source>
        <tissue>Heart</tissue>
    </source>
</reference>
<feature type="chain" id="PRO_0000365330" description="Eukaryotic translation initiation factor 3 subunit I">
    <location>
        <begin position="1"/>
        <end position="333"/>
    </location>
</feature>
<feature type="repeat" description="WD 1">
    <location>
        <begin position="8"/>
        <end position="47"/>
    </location>
</feature>
<feature type="repeat" description="WD 2">
    <location>
        <begin position="50"/>
        <end position="91"/>
    </location>
</feature>
<feature type="repeat" description="WD 3">
    <location>
        <begin position="144"/>
        <end position="183"/>
    </location>
</feature>
<feature type="repeat" description="WD 4">
    <location>
        <begin position="186"/>
        <end position="225"/>
    </location>
</feature>
<feature type="repeat" description="WD 5">
    <location>
        <begin position="283"/>
        <end position="324"/>
    </location>
</feature>
<feature type="modified residue" description="Phosphothreonine" evidence="1">
    <location>
        <position position="219"/>
    </location>
</feature>
<feature type="modified residue" description="N6-acetyllysine" evidence="1">
    <location>
        <position position="264"/>
    </location>
</feature>
<feature type="modified residue" description="Phosphotyrosine" evidence="1">
    <location>
        <position position="308"/>
    </location>
</feature>
<feature type="cross-link" description="Glycyl lysine isopeptide (Lys-Gly) (interchain with G-Cter in ubiquitin)" evidence="1">
    <location>
        <position position="282"/>
    </location>
</feature>
<sequence>MRPILLQGHERSITQIKYNREGDLLFTVAKDPIVNVWYSVNGERLGTYMGHTGAVWCVDADWDTKHVLTGSADNSCRLWDCETGKQLALLKTNSAVRTCGFDFGGNIIMFSTDKQMGYQCFVSFFDLRDPSQIDNNEPYMKIPCNDSKITSAVWGPLGECIIAGHESGELNQYSAKSGEVLVNVKEHSRQINDIQLSREMTMFVTASKDNTAKLFDSTTLEHQKTFRTEPPRELAALSPNYEHVVVGGGQEAMDVTTTSTRIGKFEARFFHLAFEEEFGRVKGHFGPINSVAFHPDGKSYSSGGEDGYVRIHYFDPQYFEFEFEAREAGSPSG</sequence>